<sequence length="216" mass="25118">MRDQILSLALLLCVLHSACGLYFHISETERKCFIEEVPDETTVIVNYKVELYDPRSNGFMPSSPGIGMHVEVRDSDDKVVLSRVYSSQGRISFTSHTPGEHIICMYSNSTAWFSGAQLRVHLDIQVGEHAIDYANVAQKEKLTELQLRIRQLLDQVEQITKEQNYQRYREERFRHTSESTNSRVLWWSLAQTVVLVCMGFWQMRHLKSFFEAKKLV</sequence>
<feature type="signal peptide" evidence="3">
    <location>
        <begin position="1"/>
        <end position="20"/>
    </location>
</feature>
<feature type="chain" id="PRO_0000393924" description="Transmembrane emp24 domain-containing protein eca" evidence="3">
    <location>
        <begin position="21"/>
        <end position="216"/>
    </location>
</feature>
<feature type="topological domain" description="Lumenal" evidence="3">
    <location>
        <begin position="21"/>
        <end position="182"/>
    </location>
</feature>
<feature type="transmembrane region" description="Helical" evidence="3">
    <location>
        <begin position="183"/>
        <end position="203"/>
    </location>
</feature>
<feature type="topological domain" description="Cytoplasmic" evidence="3">
    <location>
        <begin position="204"/>
        <end position="216"/>
    </location>
</feature>
<feature type="domain" description="GOLD" evidence="4">
    <location>
        <begin position="30"/>
        <end position="126"/>
    </location>
</feature>
<feature type="coiled-coil region" evidence="3">
    <location>
        <begin position="134"/>
        <end position="164"/>
    </location>
</feature>
<feature type="short sequence motif" description="Prevents secretion from ER" evidence="3">
    <location>
        <begin position="213"/>
        <end position="216"/>
    </location>
</feature>
<keyword id="KW-0175">Coiled coil</keyword>
<keyword id="KW-0217">Developmental protein</keyword>
<keyword id="KW-0256">Endoplasmic reticulum</keyword>
<keyword id="KW-0472">Membrane</keyword>
<keyword id="KW-1185">Reference proteome</keyword>
<keyword id="KW-0732">Signal</keyword>
<keyword id="KW-0812">Transmembrane</keyword>
<keyword id="KW-1133">Transmembrane helix</keyword>
<name>TMEDE_DROAN</name>
<accession>B3MTS8</accession>
<comment type="function">
    <text evidence="1">Eca and bai are essential, though not redundant, for dorsoventral patterning of the embryo. Specifically required during early embryogenesis for the activity of maternal tkv, while the zygotic tkv is not affected. Involved in Golgi organization (By similarity).</text>
</comment>
<comment type="subcellular location">
    <subcellularLocation>
        <location evidence="3">Endoplasmic reticulum membrane</location>
        <topology evidence="3">Single-pass type I membrane protein</topology>
    </subcellularLocation>
</comment>
<comment type="similarity">
    <text evidence="3">Belongs to the EMP24/GP25L family.</text>
</comment>
<gene>
    <name evidence="2" type="primary">eca</name>
    <name type="ORF">GF23165</name>
</gene>
<dbReference type="EMBL" id="CH902623">
    <property type="protein sequence ID" value="EDV30209.1"/>
    <property type="molecule type" value="Genomic_DNA"/>
</dbReference>
<dbReference type="SMR" id="B3MTS8"/>
<dbReference type="FunCoup" id="B3MTS8">
    <property type="interactions" value="1139"/>
</dbReference>
<dbReference type="STRING" id="7217.B3MTS8"/>
<dbReference type="EnsemblMetazoa" id="FBtr0127865">
    <property type="protein sequence ID" value="FBpp0126357"/>
    <property type="gene ID" value="FBgn0100159"/>
</dbReference>
<dbReference type="EnsemblMetazoa" id="XM_001964377.4">
    <property type="protein sequence ID" value="XP_001964413.1"/>
    <property type="gene ID" value="LOC6505811"/>
</dbReference>
<dbReference type="GeneID" id="6505811"/>
<dbReference type="KEGG" id="dan:6505811"/>
<dbReference type="CTD" id="41177"/>
<dbReference type="eggNOG" id="KOG1690">
    <property type="taxonomic scope" value="Eukaryota"/>
</dbReference>
<dbReference type="HOGENOM" id="CLU_066963_2_2_1"/>
<dbReference type="InParanoid" id="B3MTS8"/>
<dbReference type="OMA" id="GATCAWQ"/>
<dbReference type="OrthoDB" id="3427at2759"/>
<dbReference type="PhylomeDB" id="B3MTS8"/>
<dbReference type="Proteomes" id="UP000007801">
    <property type="component" value="Unassembled WGS sequence"/>
</dbReference>
<dbReference type="GO" id="GO:0005789">
    <property type="term" value="C:endoplasmic reticulum membrane"/>
    <property type="evidence" value="ECO:0007669"/>
    <property type="project" value="UniProtKB-SubCell"/>
</dbReference>
<dbReference type="GO" id="GO:0009953">
    <property type="term" value="P:dorsal/ventral pattern formation"/>
    <property type="evidence" value="ECO:0000250"/>
    <property type="project" value="UniProtKB"/>
</dbReference>
<dbReference type="InterPro" id="IPR015720">
    <property type="entry name" value="Emp24-like"/>
</dbReference>
<dbReference type="InterPro" id="IPR009038">
    <property type="entry name" value="GOLD_dom"/>
</dbReference>
<dbReference type="PANTHER" id="PTHR22811">
    <property type="entry name" value="TRANSMEMBRANE EMP24 DOMAIN-CONTAINING PROTEIN"/>
    <property type="match status" value="1"/>
</dbReference>
<dbReference type="Pfam" id="PF01105">
    <property type="entry name" value="EMP24_GP25L"/>
    <property type="match status" value="1"/>
</dbReference>
<dbReference type="SMART" id="SM01190">
    <property type="entry name" value="EMP24_GP25L"/>
    <property type="match status" value="1"/>
</dbReference>
<dbReference type="PROSITE" id="PS50866">
    <property type="entry name" value="GOLD"/>
    <property type="match status" value="1"/>
</dbReference>
<reference evidence="5" key="1">
    <citation type="journal article" date="2007" name="Nature">
        <title>Evolution of genes and genomes on the Drosophila phylogeny.</title>
        <authorList>
            <consortium name="Drosophila 12 genomes consortium"/>
        </authorList>
    </citation>
    <scope>NUCLEOTIDE SEQUENCE [LARGE SCALE GENOMIC DNA]</scope>
    <source>
        <strain evidence="5">Tucson 14024-0371.13</strain>
    </source>
</reference>
<organism>
    <name type="scientific">Drosophila ananassae</name>
    <name type="common">Fruit fly</name>
    <dbReference type="NCBI Taxonomy" id="7217"/>
    <lineage>
        <taxon>Eukaryota</taxon>
        <taxon>Metazoa</taxon>
        <taxon>Ecdysozoa</taxon>
        <taxon>Arthropoda</taxon>
        <taxon>Hexapoda</taxon>
        <taxon>Insecta</taxon>
        <taxon>Pterygota</taxon>
        <taxon>Neoptera</taxon>
        <taxon>Endopterygota</taxon>
        <taxon>Diptera</taxon>
        <taxon>Brachycera</taxon>
        <taxon>Muscomorpha</taxon>
        <taxon>Ephydroidea</taxon>
        <taxon>Drosophilidae</taxon>
        <taxon>Drosophila</taxon>
        <taxon>Sophophora</taxon>
    </lineage>
</organism>
<protein>
    <recommendedName>
        <fullName evidence="2">Transmembrane emp24 domain-containing protein eca</fullName>
    </recommendedName>
</protein>
<evidence type="ECO:0000250" key="1"/>
<evidence type="ECO:0000250" key="2">
    <source>
        <dbReference type="UniProtKB" id="Q8SXY6"/>
    </source>
</evidence>
<evidence type="ECO:0000255" key="3"/>
<evidence type="ECO:0000255" key="4">
    <source>
        <dbReference type="PROSITE-ProRule" id="PRU00096"/>
    </source>
</evidence>
<evidence type="ECO:0000312" key="5">
    <source>
        <dbReference type="EMBL" id="EDV30209.1"/>
    </source>
</evidence>
<proteinExistence type="inferred from homology"/>